<sequence length="299" mass="32287">MADTVEFAKMNGLANKILVVDMRGRKDMVTPAAAIALNSNPATQFDQIMAIHDPRVGGTDAFIDILNCDGTKAQACGNGTRCVVQALSSETGKTSFTFQTVAGILNAVEHEDGMISVDMGLPRFRWSDIPLSEEFHDTSRIELQIGPIDAPILHSPAVMSMGNPHAIFWVDRDPMTFDLERFGPLLENHPMFPEKANITLAQVISDSALRTRTWERGAGLTLACGSAACASAVSAARTGRTGRKVTIDVASSPVRVPLTIDWREDNHVVMTGPAEWEWSGSVDPVTGVWARDAVERGAV</sequence>
<gene>
    <name evidence="1" type="primary">dapF</name>
    <name type="ordered locus">Atu2695</name>
    <name type="ORF">AGR_C_4886</name>
</gene>
<organism>
    <name type="scientific">Agrobacterium fabrum (strain C58 / ATCC 33970)</name>
    <name type="common">Agrobacterium tumefaciens (strain C58)</name>
    <dbReference type="NCBI Taxonomy" id="176299"/>
    <lineage>
        <taxon>Bacteria</taxon>
        <taxon>Pseudomonadati</taxon>
        <taxon>Pseudomonadota</taxon>
        <taxon>Alphaproteobacteria</taxon>
        <taxon>Hyphomicrobiales</taxon>
        <taxon>Rhizobiaceae</taxon>
        <taxon>Rhizobium/Agrobacterium group</taxon>
        <taxon>Agrobacterium</taxon>
        <taxon>Agrobacterium tumefaciens complex</taxon>
    </lineage>
</organism>
<evidence type="ECO:0000255" key="1">
    <source>
        <dbReference type="HAMAP-Rule" id="MF_00197"/>
    </source>
</evidence>
<name>DAPF_AGRFC</name>
<keyword id="KW-0028">Amino-acid biosynthesis</keyword>
<keyword id="KW-0963">Cytoplasm</keyword>
<keyword id="KW-0413">Isomerase</keyword>
<keyword id="KW-0457">Lysine biosynthesis</keyword>
<keyword id="KW-1185">Reference proteome</keyword>
<accession>Q8UC03</accession>
<dbReference type="EC" id="5.1.1.7" evidence="1"/>
<dbReference type="EMBL" id="AE007869">
    <property type="protein sequence ID" value="AAK88415.1"/>
    <property type="molecule type" value="Genomic_DNA"/>
</dbReference>
<dbReference type="PIR" id="AF2907">
    <property type="entry name" value="AF2907"/>
</dbReference>
<dbReference type="PIR" id="F97682">
    <property type="entry name" value="F97682"/>
</dbReference>
<dbReference type="RefSeq" id="NP_355630.1">
    <property type="nucleotide sequence ID" value="NC_003062.2"/>
</dbReference>
<dbReference type="RefSeq" id="WP_010972495.1">
    <property type="nucleotide sequence ID" value="NC_003062.2"/>
</dbReference>
<dbReference type="SMR" id="Q8UC03"/>
<dbReference type="STRING" id="176299.Atu2695"/>
<dbReference type="EnsemblBacteria" id="AAK88415">
    <property type="protein sequence ID" value="AAK88415"/>
    <property type="gene ID" value="Atu2695"/>
</dbReference>
<dbReference type="GeneID" id="1134733"/>
<dbReference type="KEGG" id="atu:Atu2695"/>
<dbReference type="PATRIC" id="fig|176299.10.peg.2705"/>
<dbReference type="eggNOG" id="COG0253">
    <property type="taxonomic scope" value="Bacteria"/>
</dbReference>
<dbReference type="HOGENOM" id="CLU_053306_1_0_5"/>
<dbReference type="OrthoDB" id="9805408at2"/>
<dbReference type="PhylomeDB" id="Q8UC03"/>
<dbReference type="UniPathway" id="UPA00034">
    <property type="reaction ID" value="UER00025"/>
</dbReference>
<dbReference type="Proteomes" id="UP000000813">
    <property type="component" value="Chromosome circular"/>
</dbReference>
<dbReference type="GO" id="GO:0005829">
    <property type="term" value="C:cytosol"/>
    <property type="evidence" value="ECO:0007669"/>
    <property type="project" value="TreeGrafter"/>
</dbReference>
<dbReference type="GO" id="GO:0008837">
    <property type="term" value="F:diaminopimelate epimerase activity"/>
    <property type="evidence" value="ECO:0007669"/>
    <property type="project" value="UniProtKB-UniRule"/>
</dbReference>
<dbReference type="GO" id="GO:0009089">
    <property type="term" value="P:lysine biosynthetic process via diaminopimelate"/>
    <property type="evidence" value="ECO:0007669"/>
    <property type="project" value="UniProtKB-UniRule"/>
</dbReference>
<dbReference type="Gene3D" id="3.10.310.10">
    <property type="entry name" value="Diaminopimelate Epimerase, Chain A, domain 1"/>
    <property type="match status" value="2"/>
</dbReference>
<dbReference type="HAMAP" id="MF_00197">
    <property type="entry name" value="DAP_epimerase"/>
    <property type="match status" value="1"/>
</dbReference>
<dbReference type="InterPro" id="IPR018510">
    <property type="entry name" value="DAP_epimerase_AS"/>
</dbReference>
<dbReference type="InterPro" id="IPR001653">
    <property type="entry name" value="DAP_epimerase_DapF"/>
</dbReference>
<dbReference type="NCBIfam" id="TIGR00652">
    <property type="entry name" value="DapF"/>
    <property type="match status" value="1"/>
</dbReference>
<dbReference type="PANTHER" id="PTHR31689:SF0">
    <property type="entry name" value="DIAMINOPIMELATE EPIMERASE"/>
    <property type="match status" value="1"/>
</dbReference>
<dbReference type="PANTHER" id="PTHR31689">
    <property type="entry name" value="DIAMINOPIMELATE EPIMERASE, CHLOROPLASTIC"/>
    <property type="match status" value="1"/>
</dbReference>
<dbReference type="Pfam" id="PF01678">
    <property type="entry name" value="DAP_epimerase"/>
    <property type="match status" value="2"/>
</dbReference>
<dbReference type="SUPFAM" id="SSF54506">
    <property type="entry name" value="Diaminopimelate epimerase-like"/>
    <property type="match status" value="2"/>
</dbReference>
<dbReference type="PROSITE" id="PS01326">
    <property type="entry name" value="DAP_EPIMERASE"/>
    <property type="match status" value="1"/>
</dbReference>
<reference key="1">
    <citation type="journal article" date="2001" name="Science">
        <title>The genome of the natural genetic engineer Agrobacterium tumefaciens C58.</title>
        <authorList>
            <person name="Wood D.W."/>
            <person name="Setubal J.C."/>
            <person name="Kaul R."/>
            <person name="Monks D.E."/>
            <person name="Kitajima J.P."/>
            <person name="Okura V.K."/>
            <person name="Zhou Y."/>
            <person name="Chen L."/>
            <person name="Wood G.E."/>
            <person name="Almeida N.F. Jr."/>
            <person name="Woo L."/>
            <person name="Chen Y."/>
            <person name="Paulsen I.T."/>
            <person name="Eisen J.A."/>
            <person name="Karp P.D."/>
            <person name="Bovee D. Sr."/>
            <person name="Chapman P."/>
            <person name="Clendenning J."/>
            <person name="Deatherage G."/>
            <person name="Gillet W."/>
            <person name="Grant C."/>
            <person name="Kutyavin T."/>
            <person name="Levy R."/>
            <person name="Li M.-J."/>
            <person name="McClelland E."/>
            <person name="Palmieri A."/>
            <person name="Raymond C."/>
            <person name="Rouse G."/>
            <person name="Saenphimmachak C."/>
            <person name="Wu Z."/>
            <person name="Romero P."/>
            <person name="Gordon D."/>
            <person name="Zhang S."/>
            <person name="Yoo H."/>
            <person name="Tao Y."/>
            <person name="Biddle P."/>
            <person name="Jung M."/>
            <person name="Krespan W."/>
            <person name="Perry M."/>
            <person name="Gordon-Kamm B."/>
            <person name="Liao L."/>
            <person name="Kim S."/>
            <person name="Hendrick C."/>
            <person name="Zhao Z.-Y."/>
            <person name="Dolan M."/>
            <person name="Chumley F."/>
            <person name="Tingey S.V."/>
            <person name="Tomb J.-F."/>
            <person name="Gordon M.P."/>
            <person name="Olson M.V."/>
            <person name="Nester E.W."/>
        </authorList>
    </citation>
    <scope>NUCLEOTIDE SEQUENCE [LARGE SCALE GENOMIC DNA]</scope>
    <source>
        <strain>C58 / ATCC 33970</strain>
    </source>
</reference>
<reference key="2">
    <citation type="journal article" date="2001" name="Science">
        <title>Genome sequence of the plant pathogen and biotechnology agent Agrobacterium tumefaciens C58.</title>
        <authorList>
            <person name="Goodner B."/>
            <person name="Hinkle G."/>
            <person name="Gattung S."/>
            <person name="Miller N."/>
            <person name="Blanchard M."/>
            <person name="Qurollo B."/>
            <person name="Goldman B.S."/>
            <person name="Cao Y."/>
            <person name="Askenazi M."/>
            <person name="Halling C."/>
            <person name="Mullin L."/>
            <person name="Houmiel K."/>
            <person name="Gordon J."/>
            <person name="Vaudin M."/>
            <person name="Iartchouk O."/>
            <person name="Epp A."/>
            <person name="Liu F."/>
            <person name="Wollam C."/>
            <person name="Allinger M."/>
            <person name="Doughty D."/>
            <person name="Scott C."/>
            <person name="Lappas C."/>
            <person name="Markelz B."/>
            <person name="Flanagan C."/>
            <person name="Crowell C."/>
            <person name="Gurson J."/>
            <person name="Lomo C."/>
            <person name="Sear C."/>
            <person name="Strub G."/>
            <person name="Cielo C."/>
            <person name="Slater S."/>
        </authorList>
    </citation>
    <scope>NUCLEOTIDE SEQUENCE [LARGE SCALE GENOMIC DNA]</scope>
    <source>
        <strain>C58 / ATCC 33970</strain>
    </source>
</reference>
<comment type="function">
    <text evidence="1">Catalyzes the stereoinversion of LL-2,6-diaminopimelate (L,L-DAP) to meso-diaminopimelate (meso-DAP), a precursor of L-lysine and an essential component of the bacterial peptidoglycan.</text>
</comment>
<comment type="catalytic activity">
    <reaction evidence="1">
        <text>(2S,6S)-2,6-diaminopimelate = meso-2,6-diaminopimelate</text>
        <dbReference type="Rhea" id="RHEA:15393"/>
        <dbReference type="ChEBI" id="CHEBI:57609"/>
        <dbReference type="ChEBI" id="CHEBI:57791"/>
        <dbReference type="EC" id="5.1.1.7"/>
    </reaction>
</comment>
<comment type="pathway">
    <text evidence="1">Amino-acid biosynthesis; L-lysine biosynthesis via DAP pathway; DL-2,6-diaminopimelate from LL-2,6-diaminopimelate: step 1/1.</text>
</comment>
<comment type="subunit">
    <text evidence="1">Homodimer.</text>
</comment>
<comment type="subcellular location">
    <subcellularLocation>
        <location evidence="1">Cytoplasm</location>
    </subcellularLocation>
</comment>
<comment type="similarity">
    <text evidence="1">Belongs to the diaminopimelate epimerase family.</text>
</comment>
<protein>
    <recommendedName>
        <fullName evidence="1">Diaminopimelate epimerase</fullName>
        <shortName evidence="1">DAP epimerase</shortName>
        <ecNumber evidence="1">5.1.1.7</ecNumber>
    </recommendedName>
    <alternativeName>
        <fullName evidence="1">PLP-independent amino acid racemase</fullName>
    </alternativeName>
</protein>
<proteinExistence type="inferred from homology"/>
<feature type="chain" id="PRO_0000149815" description="Diaminopimelate epimerase">
    <location>
        <begin position="1"/>
        <end position="299"/>
    </location>
</feature>
<feature type="active site" description="Proton donor" evidence="1">
    <location>
        <position position="76"/>
    </location>
</feature>
<feature type="active site" description="Proton acceptor" evidence="1">
    <location>
        <position position="224"/>
    </location>
</feature>
<feature type="binding site" evidence="1">
    <location>
        <position position="15"/>
    </location>
    <ligand>
        <name>substrate</name>
    </ligand>
</feature>
<feature type="binding site" evidence="1">
    <location>
        <position position="47"/>
    </location>
    <ligand>
        <name>substrate</name>
    </ligand>
</feature>
<feature type="binding site" evidence="1">
    <location>
        <position position="67"/>
    </location>
    <ligand>
        <name>substrate</name>
    </ligand>
</feature>
<feature type="binding site" evidence="1">
    <location>
        <begin position="77"/>
        <end position="78"/>
    </location>
    <ligand>
        <name>substrate</name>
    </ligand>
</feature>
<feature type="binding site" evidence="1">
    <location>
        <position position="163"/>
    </location>
    <ligand>
        <name>substrate</name>
    </ligand>
</feature>
<feature type="binding site" evidence="1">
    <location>
        <position position="197"/>
    </location>
    <ligand>
        <name>substrate</name>
    </ligand>
</feature>
<feature type="binding site" evidence="1">
    <location>
        <begin position="215"/>
        <end position="216"/>
    </location>
    <ligand>
        <name>substrate</name>
    </ligand>
</feature>
<feature type="binding site" evidence="1">
    <location>
        <begin position="225"/>
        <end position="226"/>
    </location>
    <ligand>
        <name>substrate</name>
    </ligand>
</feature>
<feature type="site" description="Could be important to modulate the pK values of the two catalytic cysteine residues" evidence="1">
    <location>
        <position position="165"/>
    </location>
</feature>
<feature type="site" description="Could be important to modulate the pK values of the two catalytic cysteine residues" evidence="1">
    <location>
        <position position="215"/>
    </location>
</feature>